<reference key="1">
    <citation type="journal article" date="2003" name="Science">
        <title>Genome of Geobacter sulfurreducens: metal reduction in subsurface environments.</title>
        <authorList>
            <person name="Methe B.A."/>
            <person name="Nelson K.E."/>
            <person name="Eisen J.A."/>
            <person name="Paulsen I.T."/>
            <person name="Nelson W.C."/>
            <person name="Heidelberg J.F."/>
            <person name="Wu D."/>
            <person name="Wu M."/>
            <person name="Ward N.L."/>
            <person name="Beanan M.J."/>
            <person name="Dodson R.J."/>
            <person name="Madupu R."/>
            <person name="Brinkac L.M."/>
            <person name="Daugherty S.C."/>
            <person name="DeBoy R.T."/>
            <person name="Durkin A.S."/>
            <person name="Gwinn M.L."/>
            <person name="Kolonay J.F."/>
            <person name="Sullivan S.A."/>
            <person name="Haft D.H."/>
            <person name="Selengut J."/>
            <person name="Davidsen T.M."/>
            <person name="Zafar N."/>
            <person name="White O."/>
            <person name="Tran B."/>
            <person name="Romero C."/>
            <person name="Forberger H.A."/>
            <person name="Weidman J.F."/>
            <person name="Khouri H.M."/>
            <person name="Feldblyum T.V."/>
            <person name="Utterback T.R."/>
            <person name="Van Aken S.E."/>
            <person name="Lovley D.R."/>
            <person name="Fraser C.M."/>
        </authorList>
    </citation>
    <scope>NUCLEOTIDE SEQUENCE [LARGE SCALE GENOMIC DNA]</scope>
    <source>
        <strain>ATCC 51573 / DSM 12127 / PCA</strain>
    </source>
</reference>
<comment type="cofactor">
    <cofactor evidence="1">
        <name>[4Fe-4S] cluster</name>
        <dbReference type="ChEBI" id="CHEBI:49883"/>
    </cofactor>
    <text evidence="1">Binds 1 [4Fe-4S] cluster. The cluster is coordinated with 3 cysteines and an exchangeable S-adenosyl-L-methionine.</text>
</comment>
<comment type="similarity">
    <text evidence="1">Belongs to the UPF0313 family.</text>
</comment>
<dbReference type="EMBL" id="AE017180">
    <property type="protein sequence ID" value="AAR36265.1"/>
    <property type="molecule type" value="Genomic_DNA"/>
</dbReference>
<dbReference type="RefSeq" id="NP_953915.1">
    <property type="nucleotide sequence ID" value="NC_002939.5"/>
</dbReference>
<dbReference type="RefSeq" id="WP_010943502.1">
    <property type="nucleotide sequence ID" value="NC_002939.5"/>
</dbReference>
<dbReference type="FunCoup" id="P61404">
    <property type="interactions" value="26"/>
</dbReference>
<dbReference type="STRING" id="243231.GSU2873"/>
<dbReference type="EnsemblBacteria" id="AAR36265">
    <property type="protein sequence ID" value="AAR36265"/>
    <property type="gene ID" value="GSU2873"/>
</dbReference>
<dbReference type="KEGG" id="gsu:GSU2873"/>
<dbReference type="PATRIC" id="fig|243231.5.peg.2901"/>
<dbReference type="eggNOG" id="COG1032">
    <property type="taxonomic scope" value="Bacteria"/>
</dbReference>
<dbReference type="HOGENOM" id="CLU_018288_2_0_7"/>
<dbReference type="InParanoid" id="P61404"/>
<dbReference type="OrthoDB" id="9803479at2"/>
<dbReference type="Proteomes" id="UP000000577">
    <property type="component" value="Chromosome"/>
</dbReference>
<dbReference type="GO" id="GO:0051539">
    <property type="term" value="F:4 iron, 4 sulfur cluster binding"/>
    <property type="evidence" value="ECO:0007669"/>
    <property type="project" value="UniProtKB-KW"/>
</dbReference>
<dbReference type="GO" id="GO:0003824">
    <property type="term" value="F:catalytic activity"/>
    <property type="evidence" value="ECO:0007669"/>
    <property type="project" value="InterPro"/>
</dbReference>
<dbReference type="GO" id="GO:0005506">
    <property type="term" value="F:iron ion binding"/>
    <property type="evidence" value="ECO:0007669"/>
    <property type="project" value="UniProtKB-UniRule"/>
</dbReference>
<dbReference type="Gene3D" id="3.80.30.20">
    <property type="entry name" value="tm_1862 like domain"/>
    <property type="match status" value="1"/>
</dbReference>
<dbReference type="HAMAP" id="MF_01251">
    <property type="entry name" value="UPF0313"/>
    <property type="match status" value="1"/>
</dbReference>
<dbReference type="InterPro" id="IPR006638">
    <property type="entry name" value="Elp3/MiaA/NifB-like_rSAM"/>
</dbReference>
<dbReference type="InterPro" id="IPR020612">
    <property type="entry name" value="Methylthiotransferase_CS"/>
</dbReference>
<dbReference type="InterPro" id="IPR007197">
    <property type="entry name" value="rSAM"/>
</dbReference>
<dbReference type="InterPro" id="IPR023404">
    <property type="entry name" value="rSAM_horseshoe"/>
</dbReference>
<dbReference type="InterPro" id="IPR022946">
    <property type="entry name" value="UPF0313"/>
</dbReference>
<dbReference type="InterPro" id="IPR024560">
    <property type="entry name" value="UPF0313_C"/>
</dbReference>
<dbReference type="InterPro" id="IPR013704">
    <property type="entry name" value="UPF0313_N"/>
</dbReference>
<dbReference type="NCBIfam" id="TIGR03904">
    <property type="entry name" value="SAM_YgiQ"/>
    <property type="match status" value="1"/>
</dbReference>
<dbReference type="PANTHER" id="PTHR32331">
    <property type="entry name" value="UPF0313 PROTEIN YGIQ"/>
    <property type="match status" value="1"/>
</dbReference>
<dbReference type="PANTHER" id="PTHR32331:SF0">
    <property type="entry name" value="UPF0313 PROTEIN YGIQ"/>
    <property type="match status" value="1"/>
</dbReference>
<dbReference type="Pfam" id="PF11842">
    <property type="entry name" value="DUF3362"/>
    <property type="match status" value="1"/>
</dbReference>
<dbReference type="Pfam" id="PF04055">
    <property type="entry name" value="Radical_SAM"/>
    <property type="match status" value="1"/>
</dbReference>
<dbReference type="Pfam" id="PF08497">
    <property type="entry name" value="Radical_SAM_N"/>
    <property type="match status" value="1"/>
</dbReference>
<dbReference type="SFLD" id="SFLDG01082">
    <property type="entry name" value="B12-binding_domain_containing"/>
    <property type="match status" value="1"/>
</dbReference>
<dbReference type="SFLD" id="SFLDS00029">
    <property type="entry name" value="Radical_SAM"/>
    <property type="match status" value="1"/>
</dbReference>
<dbReference type="SFLD" id="SFLDG01069">
    <property type="entry name" value="UPF0313"/>
    <property type="match status" value="1"/>
</dbReference>
<dbReference type="SMART" id="SM00729">
    <property type="entry name" value="Elp3"/>
    <property type="match status" value="1"/>
</dbReference>
<dbReference type="SUPFAM" id="SSF102114">
    <property type="entry name" value="Radical SAM enzymes"/>
    <property type="match status" value="1"/>
</dbReference>
<dbReference type="PROSITE" id="PS51918">
    <property type="entry name" value="RADICAL_SAM"/>
    <property type="match status" value="1"/>
</dbReference>
<sequence>MSFLPVTRGEALKRGWDELDIVFVTGDAYVDHPAFGVPLLARWLEFHGFRVGIIPQPDWRSCEPFMALGRPRLFFAVSSGAMDSMVAHYTPARKLRHDDAYTPGNRHGARPNRATIVYTSRLKEAYRDVPVVIGGIEASLRRFAHYDYWEDKVRRSLLLDAKADLLVHGMGERPILELARRVRTGEPFQAIADIRGTAVVLGRGAAPPAGVVELPPFEEVAADRHRYAEAFRLLSREQNPHCAHPLVQRHGDRTLLCNPPAYPLEEAELDSVYALPFQRAPHPSHGEPIPAYEQIRASVTTHRGCFGGCSFCAITHHQGKVIQSRSERSVLAEVERMAAMAWFRGSVSDVGGPTANMYGVHCGNTRGGHACRRESCLYPSPCRYLAVGGERGAALLRAVRGVRGVRNVAVSSGIRYDLMERQPAYFRELVAHHVGGLLKVAPEHMVARVTDLMRKPGKESFDRFLERFRRESARLGKKQYIIPYLMSGHPGCTLDDMVELALFLKRAGLRVEQVQDFTPTPGTLSTCMYHTGLDPFAGAPVHVPRGDREKRLQKALLLWHLPTERRNVLDALRACGRESVARELLGGAAGGGGGRSGSGFRPGRT</sequence>
<keyword id="KW-0004">4Fe-4S</keyword>
<keyword id="KW-0408">Iron</keyword>
<keyword id="KW-0411">Iron-sulfur</keyword>
<keyword id="KW-0479">Metal-binding</keyword>
<keyword id="KW-1185">Reference proteome</keyword>
<keyword id="KW-0949">S-adenosyl-L-methionine</keyword>
<protein>
    <recommendedName>
        <fullName evidence="1">UPF0313 protein GSU2873</fullName>
    </recommendedName>
</protein>
<gene>
    <name type="ordered locus">GSU2873</name>
</gene>
<proteinExistence type="inferred from homology"/>
<organism>
    <name type="scientific">Geobacter sulfurreducens (strain ATCC 51573 / DSM 12127 / PCA)</name>
    <dbReference type="NCBI Taxonomy" id="243231"/>
    <lineage>
        <taxon>Bacteria</taxon>
        <taxon>Pseudomonadati</taxon>
        <taxon>Thermodesulfobacteriota</taxon>
        <taxon>Desulfuromonadia</taxon>
        <taxon>Geobacterales</taxon>
        <taxon>Geobacteraceae</taxon>
        <taxon>Geobacter</taxon>
    </lineage>
</organism>
<evidence type="ECO:0000255" key="1">
    <source>
        <dbReference type="HAMAP-Rule" id="MF_01251"/>
    </source>
</evidence>
<evidence type="ECO:0000255" key="2">
    <source>
        <dbReference type="PROSITE-ProRule" id="PRU01266"/>
    </source>
</evidence>
<evidence type="ECO:0000256" key="3">
    <source>
        <dbReference type="SAM" id="MobiDB-lite"/>
    </source>
</evidence>
<accession>P61404</accession>
<name>Y2873_GEOSL</name>
<feature type="chain" id="PRO_0000076387" description="UPF0313 protein GSU2873">
    <location>
        <begin position="1"/>
        <end position="605"/>
    </location>
</feature>
<feature type="domain" description="Radical SAM core" evidence="2">
    <location>
        <begin position="291"/>
        <end position="561"/>
    </location>
</feature>
<feature type="region of interest" description="Disordered" evidence="3">
    <location>
        <begin position="586"/>
        <end position="605"/>
    </location>
</feature>
<feature type="compositionally biased region" description="Gly residues" evidence="3">
    <location>
        <begin position="587"/>
        <end position="597"/>
    </location>
</feature>
<feature type="binding site" evidence="1">
    <location>
        <position position="305"/>
    </location>
    <ligand>
        <name>[4Fe-4S] cluster</name>
        <dbReference type="ChEBI" id="CHEBI:49883"/>
        <note>4Fe-4S-S-AdoMet</note>
    </ligand>
</feature>
<feature type="binding site" evidence="1">
    <location>
        <position position="309"/>
    </location>
    <ligand>
        <name>[4Fe-4S] cluster</name>
        <dbReference type="ChEBI" id="CHEBI:49883"/>
        <note>4Fe-4S-S-AdoMet</note>
    </ligand>
</feature>
<feature type="binding site" evidence="1">
    <location>
        <position position="312"/>
    </location>
    <ligand>
        <name>[4Fe-4S] cluster</name>
        <dbReference type="ChEBI" id="CHEBI:49883"/>
        <note>4Fe-4S-S-AdoMet</note>
    </ligand>
</feature>